<gene>
    <name type="primary">yoqJ</name>
    <name type="ordered locus">BSU20610</name>
</gene>
<evidence type="ECO:0000305" key="1"/>
<protein>
    <recommendedName>
        <fullName>Uncharacterized SPbeta prophage-derived protein YoqJ</fullName>
    </recommendedName>
</protein>
<feature type="chain" id="PRO_0000359964" description="Uncharacterized SPbeta prophage-derived protein YoqJ">
    <location>
        <begin position="1"/>
        <end position="171"/>
    </location>
</feature>
<accession>O34359</accession>
<sequence length="171" mass="19883">MKNPTMLKLKDKLLAVIEELITKENKYRFITGGALGTDQAACWCVHILKKKHPHIKNIIATPFKEQDKVWSADQKMWYKRMLNVADEIINVEELDKYKVSGEKPGEFSPAKMQKRNEYMIDHSEAIVAVYDGSKSGTRNCLNYAKKTYLGHQLWRLHPDFNFELDITYFVG</sequence>
<dbReference type="EMBL" id="AL009126">
    <property type="protein sequence ID" value="CAB13953.1"/>
    <property type="molecule type" value="Genomic_DNA"/>
</dbReference>
<dbReference type="RefSeq" id="NP_389943.1">
    <property type="nucleotide sequence ID" value="NC_000964.3"/>
</dbReference>
<dbReference type="RefSeq" id="WP_004399499.1">
    <property type="nucleotide sequence ID" value="NZ_OZ025638.1"/>
</dbReference>
<dbReference type="SMR" id="O34359"/>
<dbReference type="FunCoup" id="O34359">
    <property type="interactions" value="21"/>
</dbReference>
<dbReference type="STRING" id="224308.BSU20610"/>
<dbReference type="PaxDb" id="224308-BSU20610"/>
<dbReference type="EnsemblBacteria" id="CAB13953">
    <property type="protein sequence ID" value="CAB13953"/>
    <property type="gene ID" value="BSU_20610"/>
</dbReference>
<dbReference type="GeneID" id="939585"/>
<dbReference type="KEGG" id="bsu:BSU20610"/>
<dbReference type="PATRIC" id="fig|224308.179.peg.2251"/>
<dbReference type="eggNOG" id="COG4474">
    <property type="taxonomic scope" value="Bacteria"/>
</dbReference>
<dbReference type="InParanoid" id="O34359"/>
<dbReference type="OrthoDB" id="1795759at2"/>
<dbReference type="PhylomeDB" id="O34359"/>
<dbReference type="BioCyc" id="BSUB:BSU20610-MONOMER"/>
<dbReference type="Proteomes" id="UP000001570">
    <property type="component" value="Chromosome"/>
</dbReference>
<dbReference type="Gene3D" id="3.40.50.450">
    <property type="match status" value="1"/>
</dbReference>
<dbReference type="InterPro" id="IPR010697">
    <property type="entry name" value="YspA"/>
</dbReference>
<dbReference type="PANTHER" id="PTHR38440:SF1">
    <property type="entry name" value="UPF0398 PROTEIN SPR0331"/>
    <property type="match status" value="1"/>
</dbReference>
<dbReference type="PANTHER" id="PTHR38440">
    <property type="entry name" value="UPF0398 PROTEIN YPSA"/>
    <property type="match status" value="1"/>
</dbReference>
<dbReference type="Pfam" id="PF06908">
    <property type="entry name" value="YpsA"/>
    <property type="match status" value="1"/>
</dbReference>
<dbReference type="PIRSF" id="PIRSF021290">
    <property type="entry name" value="DUF1273"/>
    <property type="match status" value="1"/>
</dbReference>
<dbReference type="SUPFAM" id="SSF102405">
    <property type="entry name" value="MCP/YpsA-like"/>
    <property type="match status" value="1"/>
</dbReference>
<name>YOQJ_BACSU</name>
<reference key="1">
    <citation type="journal article" date="1997" name="Nature">
        <title>The complete genome sequence of the Gram-positive bacterium Bacillus subtilis.</title>
        <authorList>
            <person name="Kunst F."/>
            <person name="Ogasawara N."/>
            <person name="Moszer I."/>
            <person name="Albertini A.M."/>
            <person name="Alloni G."/>
            <person name="Azevedo V."/>
            <person name="Bertero M.G."/>
            <person name="Bessieres P."/>
            <person name="Bolotin A."/>
            <person name="Borchert S."/>
            <person name="Borriss R."/>
            <person name="Boursier L."/>
            <person name="Brans A."/>
            <person name="Braun M."/>
            <person name="Brignell S.C."/>
            <person name="Bron S."/>
            <person name="Brouillet S."/>
            <person name="Bruschi C.V."/>
            <person name="Caldwell B."/>
            <person name="Capuano V."/>
            <person name="Carter N.M."/>
            <person name="Choi S.-K."/>
            <person name="Codani J.-J."/>
            <person name="Connerton I.F."/>
            <person name="Cummings N.J."/>
            <person name="Daniel R.A."/>
            <person name="Denizot F."/>
            <person name="Devine K.M."/>
            <person name="Duesterhoeft A."/>
            <person name="Ehrlich S.D."/>
            <person name="Emmerson P.T."/>
            <person name="Entian K.-D."/>
            <person name="Errington J."/>
            <person name="Fabret C."/>
            <person name="Ferrari E."/>
            <person name="Foulger D."/>
            <person name="Fritz C."/>
            <person name="Fujita M."/>
            <person name="Fujita Y."/>
            <person name="Fuma S."/>
            <person name="Galizzi A."/>
            <person name="Galleron N."/>
            <person name="Ghim S.-Y."/>
            <person name="Glaser P."/>
            <person name="Goffeau A."/>
            <person name="Golightly E.J."/>
            <person name="Grandi G."/>
            <person name="Guiseppi G."/>
            <person name="Guy B.J."/>
            <person name="Haga K."/>
            <person name="Haiech J."/>
            <person name="Harwood C.R."/>
            <person name="Henaut A."/>
            <person name="Hilbert H."/>
            <person name="Holsappel S."/>
            <person name="Hosono S."/>
            <person name="Hullo M.-F."/>
            <person name="Itaya M."/>
            <person name="Jones L.-M."/>
            <person name="Joris B."/>
            <person name="Karamata D."/>
            <person name="Kasahara Y."/>
            <person name="Klaerr-Blanchard M."/>
            <person name="Klein C."/>
            <person name="Kobayashi Y."/>
            <person name="Koetter P."/>
            <person name="Koningstein G."/>
            <person name="Krogh S."/>
            <person name="Kumano M."/>
            <person name="Kurita K."/>
            <person name="Lapidus A."/>
            <person name="Lardinois S."/>
            <person name="Lauber J."/>
            <person name="Lazarevic V."/>
            <person name="Lee S.-M."/>
            <person name="Levine A."/>
            <person name="Liu H."/>
            <person name="Masuda S."/>
            <person name="Mauel C."/>
            <person name="Medigue C."/>
            <person name="Medina N."/>
            <person name="Mellado R.P."/>
            <person name="Mizuno M."/>
            <person name="Moestl D."/>
            <person name="Nakai S."/>
            <person name="Noback M."/>
            <person name="Noone D."/>
            <person name="O'Reilly M."/>
            <person name="Ogawa K."/>
            <person name="Ogiwara A."/>
            <person name="Oudega B."/>
            <person name="Park S.-H."/>
            <person name="Parro V."/>
            <person name="Pohl T.M."/>
            <person name="Portetelle D."/>
            <person name="Porwollik S."/>
            <person name="Prescott A.M."/>
            <person name="Presecan E."/>
            <person name="Pujic P."/>
            <person name="Purnelle B."/>
            <person name="Rapoport G."/>
            <person name="Rey M."/>
            <person name="Reynolds S."/>
            <person name="Rieger M."/>
            <person name="Rivolta C."/>
            <person name="Rocha E."/>
            <person name="Roche B."/>
            <person name="Rose M."/>
            <person name="Sadaie Y."/>
            <person name="Sato T."/>
            <person name="Scanlan E."/>
            <person name="Schleich S."/>
            <person name="Schroeter R."/>
            <person name="Scoffone F."/>
            <person name="Sekiguchi J."/>
            <person name="Sekowska A."/>
            <person name="Seror S.J."/>
            <person name="Serror P."/>
            <person name="Shin B.-S."/>
            <person name="Soldo B."/>
            <person name="Sorokin A."/>
            <person name="Tacconi E."/>
            <person name="Takagi T."/>
            <person name="Takahashi H."/>
            <person name="Takemaru K."/>
            <person name="Takeuchi M."/>
            <person name="Tamakoshi A."/>
            <person name="Tanaka T."/>
            <person name="Terpstra P."/>
            <person name="Tognoni A."/>
            <person name="Tosato V."/>
            <person name="Uchiyama S."/>
            <person name="Vandenbol M."/>
            <person name="Vannier F."/>
            <person name="Vassarotti A."/>
            <person name="Viari A."/>
            <person name="Wambutt R."/>
            <person name="Wedler E."/>
            <person name="Wedler H."/>
            <person name="Weitzenegger T."/>
            <person name="Winters P."/>
            <person name="Wipat A."/>
            <person name="Yamamoto H."/>
            <person name="Yamane K."/>
            <person name="Yasumoto K."/>
            <person name="Yata K."/>
            <person name="Yoshida K."/>
            <person name="Yoshikawa H.-F."/>
            <person name="Zumstein E."/>
            <person name="Yoshikawa H."/>
            <person name="Danchin A."/>
        </authorList>
    </citation>
    <scope>NUCLEOTIDE SEQUENCE [LARGE SCALE GENOMIC DNA]</scope>
    <source>
        <strain>168</strain>
    </source>
</reference>
<organism>
    <name type="scientific">Bacillus subtilis (strain 168)</name>
    <dbReference type="NCBI Taxonomy" id="224308"/>
    <lineage>
        <taxon>Bacteria</taxon>
        <taxon>Bacillati</taxon>
        <taxon>Bacillota</taxon>
        <taxon>Bacilli</taxon>
        <taxon>Bacillales</taxon>
        <taxon>Bacillaceae</taxon>
        <taxon>Bacillus</taxon>
    </lineage>
</organism>
<keyword id="KW-1185">Reference proteome</keyword>
<comment type="caution">
    <text evidence="1">Although it shares some weak sequence similarity with the UPF0398 family, it is distinct form other members of the family.</text>
</comment>
<proteinExistence type="predicted"/>